<evidence type="ECO:0000255" key="1">
    <source>
        <dbReference type="HAMAP-Rule" id="MF_00445"/>
    </source>
</evidence>
<feature type="chain" id="PRO_1000145880" description="NADH-quinone oxidoreductase subunit N">
    <location>
        <begin position="1"/>
        <end position="485"/>
    </location>
</feature>
<feature type="transmembrane region" description="Helical" evidence="1">
    <location>
        <begin position="8"/>
        <end position="28"/>
    </location>
</feature>
<feature type="transmembrane region" description="Helical" evidence="1">
    <location>
        <begin position="35"/>
        <end position="55"/>
    </location>
</feature>
<feature type="transmembrane region" description="Helical" evidence="1">
    <location>
        <begin position="71"/>
        <end position="91"/>
    </location>
</feature>
<feature type="transmembrane region" description="Helical" evidence="1">
    <location>
        <begin position="105"/>
        <end position="125"/>
    </location>
</feature>
<feature type="transmembrane region" description="Helical" evidence="1">
    <location>
        <begin position="127"/>
        <end position="147"/>
    </location>
</feature>
<feature type="transmembrane region" description="Helical" evidence="1">
    <location>
        <begin position="159"/>
        <end position="179"/>
    </location>
</feature>
<feature type="transmembrane region" description="Helical" evidence="1">
    <location>
        <begin position="203"/>
        <end position="223"/>
    </location>
</feature>
<feature type="transmembrane region" description="Helical" evidence="1">
    <location>
        <begin position="235"/>
        <end position="255"/>
    </location>
</feature>
<feature type="transmembrane region" description="Helical" evidence="1">
    <location>
        <begin position="271"/>
        <end position="291"/>
    </location>
</feature>
<feature type="transmembrane region" description="Helical" evidence="1">
    <location>
        <begin position="297"/>
        <end position="317"/>
    </location>
</feature>
<feature type="transmembrane region" description="Helical" evidence="1">
    <location>
        <begin position="326"/>
        <end position="346"/>
    </location>
</feature>
<feature type="transmembrane region" description="Helical" evidence="1">
    <location>
        <begin position="373"/>
        <end position="393"/>
    </location>
</feature>
<feature type="transmembrane region" description="Helical" evidence="1">
    <location>
        <begin position="408"/>
        <end position="430"/>
    </location>
</feature>
<feature type="transmembrane region" description="Helical" evidence="1">
    <location>
        <begin position="455"/>
        <end position="475"/>
    </location>
</feature>
<protein>
    <recommendedName>
        <fullName evidence="1">NADH-quinone oxidoreductase subunit N</fullName>
        <ecNumber evidence="1">7.1.1.-</ecNumber>
    </recommendedName>
    <alternativeName>
        <fullName evidence="1">NADH dehydrogenase I subunit N</fullName>
    </alternativeName>
    <alternativeName>
        <fullName evidence="1">NDH-1 subunit N</fullName>
    </alternativeName>
</protein>
<comment type="function">
    <text evidence="1">NDH-1 shuttles electrons from NADH, via FMN and iron-sulfur (Fe-S) centers, to quinones in the respiratory chain. The immediate electron acceptor for the enzyme in this species is believed to be ubiquinone. Couples the redox reaction to proton translocation (for every two electrons transferred, four hydrogen ions are translocated across the cytoplasmic membrane), and thus conserves the redox energy in a proton gradient.</text>
</comment>
<comment type="catalytic activity">
    <reaction evidence="1">
        <text>a quinone + NADH + 5 H(+)(in) = a quinol + NAD(+) + 4 H(+)(out)</text>
        <dbReference type="Rhea" id="RHEA:57888"/>
        <dbReference type="ChEBI" id="CHEBI:15378"/>
        <dbReference type="ChEBI" id="CHEBI:24646"/>
        <dbReference type="ChEBI" id="CHEBI:57540"/>
        <dbReference type="ChEBI" id="CHEBI:57945"/>
        <dbReference type="ChEBI" id="CHEBI:132124"/>
    </reaction>
</comment>
<comment type="subunit">
    <text evidence="1">NDH-1 is composed of 13 different subunits. Subunits NuoA, H, J, K, L, M, N constitute the membrane sector of the complex.</text>
</comment>
<comment type="subcellular location">
    <subcellularLocation>
        <location evidence="1">Cell inner membrane</location>
        <topology evidence="1">Multi-pass membrane protein</topology>
    </subcellularLocation>
</comment>
<comment type="similarity">
    <text evidence="1">Belongs to the complex I subunit 2 family.</text>
</comment>
<sequence length="485" mass="52020">MTITPQNLIALLPLLIVGLTVVVVMLSIAWRRNHFLNATLSVIGLNAALVSLWFVGQAGAMDVTPLMRVDGFAMLYTGLVLLASLATCTFAYPWLEGYNDNKDEFYLLVLIAALGGILLANANHLASLFLGIELISLPLFGLVGYAFRQKRSLEASIKYTILSAAASSFLLFGMALVYAQSGDLSFVALGKNLGDGMLNEPLLLAGFGMMIVGLGFKLSLVPFHLWTPDVYQGAPAPVSTFLATASKIAIFGVVMRLFLYAPVGDSEAIRVVLAIIAFASIIFGNLMALSQTNIKRLLGYSSISHLGYLLVALIALQTGEMSMEAVGGYLAGYLFSSLGAFGVVSLMSSPYRGPDADSLFSYRGLFWHRPILAAVMTVMMLSLAGIPMTLGFIGKFYVLAVGVQAHLWWLVGAVVVGSAIGLYYYLRVAVSLYLHAPEQPGRDAPSNWQYSAGGIVVLISALLVLVLGVWPQPLISIVRLAMPLM</sequence>
<keyword id="KW-0997">Cell inner membrane</keyword>
<keyword id="KW-1003">Cell membrane</keyword>
<keyword id="KW-0472">Membrane</keyword>
<keyword id="KW-0520">NAD</keyword>
<keyword id="KW-0874">Quinone</keyword>
<keyword id="KW-1185">Reference proteome</keyword>
<keyword id="KW-1278">Translocase</keyword>
<keyword id="KW-0812">Transmembrane</keyword>
<keyword id="KW-1133">Transmembrane helix</keyword>
<keyword id="KW-0813">Transport</keyword>
<keyword id="KW-0830">Ubiquinone</keyword>
<organism>
    <name type="scientific">Shigella boydii serotype 18 (strain CDC 3083-94 / BS512)</name>
    <dbReference type="NCBI Taxonomy" id="344609"/>
    <lineage>
        <taxon>Bacteria</taxon>
        <taxon>Pseudomonadati</taxon>
        <taxon>Pseudomonadota</taxon>
        <taxon>Gammaproteobacteria</taxon>
        <taxon>Enterobacterales</taxon>
        <taxon>Enterobacteriaceae</taxon>
        <taxon>Shigella</taxon>
    </lineage>
</organism>
<accession>B2TW57</accession>
<reference key="1">
    <citation type="submission" date="2008-05" db="EMBL/GenBank/DDBJ databases">
        <title>Complete sequence of Shigella boydii serotype 18 strain BS512.</title>
        <authorList>
            <person name="Rasko D.A."/>
            <person name="Rosovitz M."/>
            <person name="Maurelli A.T."/>
            <person name="Myers G."/>
            <person name="Seshadri R."/>
            <person name="Cer R."/>
            <person name="Jiang L."/>
            <person name="Ravel J."/>
            <person name="Sebastian Y."/>
        </authorList>
    </citation>
    <scope>NUCLEOTIDE SEQUENCE [LARGE SCALE GENOMIC DNA]</scope>
    <source>
        <strain>CDC 3083-94 / BS512</strain>
    </source>
</reference>
<proteinExistence type="inferred from homology"/>
<dbReference type="EC" id="7.1.1.-" evidence="1"/>
<dbReference type="EMBL" id="CP001063">
    <property type="protein sequence ID" value="ACD09825.1"/>
    <property type="molecule type" value="Genomic_DNA"/>
</dbReference>
<dbReference type="RefSeq" id="WP_000156717.1">
    <property type="nucleotide sequence ID" value="NC_010658.1"/>
</dbReference>
<dbReference type="SMR" id="B2TW57"/>
<dbReference type="STRING" id="344609.SbBS512_E2652"/>
<dbReference type="KEGG" id="sbc:SbBS512_E2652"/>
<dbReference type="HOGENOM" id="CLU_007100_1_5_6"/>
<dbReference type="Proteomes" id="UP000001030">
    <property type="component" value="Chromosome"/>
</dbReference>
<dbReference type="GO" id="GO:0005886">
    <property type="term" value="C:plasma membrane"/>
    <property type="evidence" value="ECO:0007669"/>
    <property type="project" value="UniProtKB-SubCell"/>
</dbReference>
<dbReference type="GO" id="GO:0008137">
    <property type="term" value="F:NADH dehydrogenase (ubiquinone) activity"/>
    <property type="evidence" value="ECO:0007669"/>
    <property type="project" value="InterPro"/>
</dbReference>
<dbReference type="GO" id="GO:0050136">
    <property type="term" value="F:NADH:ubiquinone reductase (non-electrogenic) activity"/>
    <property type="evidence" value="ECO:0007669"/>
    <property type="project" value="UniProtKB-UniRule"/>
</dbReference>
<dbReference type="GO" id="GO:0048038">
    <property type="term" value="F:quinone binding"/>
    <property type="evidence" value="ECO:0007669"/>
    <property type="project" value="UniProtKB-KW"/>
</dbReference>
<dbReference type="GO" id="GO:0042773">
    <property type="term" value="P:ATP synthesis coupled electron transport"/>
    <property type="evidence" value="ECO:0007669"/>
    <property type="project" value="InterPro"/>
</dbReference>
<dbReference type="HAMAP" id="MF_00445">
    <property type="entry name" value="NDH1_NuoN_1"/>
    <property type="match status" value="1"/>
</dbReference>
<dbReference type="InterPro" id="IPR010096">
    <property type="entry name" value="NADH-Q_OxRdtase_suN/2"/>
</dbReference>
<dbReference type="InterPro" id="IPR001750">
    <property type="entry name" value="ND/Mrp_TM"/>
</dbReference>
<dbReference type="NCBIfam" id="TIGR01770">
    <property type="entry name" value="NDH_I_N"/>
    <property type="match status" value="1"/>
</dbReference>
<dbReference type="NCBIfam" id="NF004439">
    <property type="entry name" value="PRK05777.1-1"/>
    <property type="match status" value="1"/>
</dbReference>
<dbReference type="PANTHER" id="PTHR22773">
    <property type="entry name" value="NADH DEHYDROGENASE"/>
    <property type="match status" value="1"/>
</dbReference>
<dbReference type="Pfam" id="PF00361">
    <property type="entry name" value="Proton_antipo_M"/>
    <property type="match status" value="1"/>
</dbReference>
<name>NUON_SHIB3</name>
<gene>
    <name evidence="1" type="primary">nuoN</name>
    <name type="ordered locus">SbBS512_E2652</name>
</gene>